<sequence length="153" mass="17745">MKPQKSLRARAMDILSRQEVSRIGLKRKLAPHAESEEELENVLNEFAERNWQSDLRYAEAYIRSKSRKHGSLRLKQALAQQGIDEKTSRNLLPDRSSEKQAAIAVLRKKFKHPAANLKEKQKQARFLAYRGFDADTVQTALKHAWDENWEDSC</sequence>
<reference key="1">
    <citation type="submission" date="2003-03" db="EMBL/GenBank/DDBJ databases">
        <title>The complete genome sequence of Neisseria gonorrhoeae.</title>
        <authorList>
            <person name="Lewis L.A."/>
            <person name="Gillaspy A.F."/>
            <person name="McLaughlin R.E."/>
            <person name="Gipson M."/>
            <person name="Ducey T.F."/>
            <person name="Ownbey T."/>
            <person name="Hartman K."/>
            <person name="Nydick C."/>
            <person name="Carson M.B."/>
            <person name="Vaughn J."/>
            <person name="Thomson C."/>
            <person name="Song L."/>
            <person name="Lin S."/>
            <person name="Yuan X."/>
            <person name="Najar F."/>
            <person name="Zhan M."/>
            <person name="Ren Q."/>
            <person name="Zhu H."/>
            <person name="Qi S."/>
            <person name="Kenton S.M."/>
            <person name="Lai H."/>
            <person name="White J.D."/>
            <person name="Clifton S."/>
            <person name="Roe B.A."/>
            <person name="Dyer D.W."/>
        </authorList>
    </citation>
    <scope>NUCLEOTIDE SEQUENCE [LARGE SCALE GENOMIC DNA]</scope>
    <source>
        <strain>ATCC 700825 / FA 1090</strain>
    </source>
</reference>
<dbReference type="EMBL" id="AE004969">
    <property type="protein sequence ID" value="AAW89724.1"/>
    <property type="molecule type" value="Genomic_DNA"/>
</dbReference>
<dbReference type="RefSeq" id="WP_003688187.1">
    <property type="nucleotide sequence ID" value="NC_002946.2"/>
</dbReference>
<dbReference type="RefSeq" id="YP_208136.1">
    <property type="nucleotide sequence ID" value="NC_002946.2"/>
</dbReference>
<dbReference type="SMR" id="Q5F7W3"/>
<dbReference type="STRING" id="242231.NGO_1053"/>
<dbReference type="GeneID" id="66753371"/>
<dbReference type="KEGG" id="ngo:NGO_1053"/>
<dbReference type="PATRIC" id="fig|242231.10.peg.1235"/>
<dbReference type="HOGENOM" id="CLU_066607_3_1_4"/>
<dbReference type="Proteomes" id="UP000000535">
    <property type="component" value="Chromosome"/>
</dbReference>
<dbReference type="GO" id="GO:0005737">
    <property type="term" value="C:cytoplasm"/>
    <property type="evidence" value="ECO:0007669"/>
    <property type="project" value="UniProtKB-SubCell"/>
</dbReference>
<dbReference type="GO" id="GO:0032780">
    <property type="term" value="P:negative regulation of ATP-dependent activity"/>
    <property type="evidence" value="ECO:0000314"/>
    <property type="project" value="CACAO"/>
</dbReference>
<dbReference type="GO" id="GO:0006282">
    <property type="term" value="P:regulation of DNA repair"/>
    <property type="evidence" value="ECO:0007669"/>
    <property type="project" value="UniProtKB-UniRule"/>
</dbReference>
<dbReference type="Gene3D" id="1.10.10.10">
    <property type="entry name" value="Winged helix-like DNA-binding domain superfamily/Winged helix DNA-binding domain"/>
    <property type="match status" value="3"/>
</dbReference>
<dbReference type="HAMAP" id="MF_01114">
    <property type="entry name" value="RecX"/>
    <property type="match status" value="1"/>
</dbReference>
<dbReference type="InterPro" id="IPR053924">
    <property type="entry name" value="RecX_HTH_2nd"/>
</dbReference>
<dbReference type="InterPro" id="IPR053925">
    <property type="entry name" value="RecX_HTH_3rd"/>
</dbReference>
<dbReference type="InterPro" id="IPR003783">
    <property type="entry name" value="Regulatory_RecX"/>
</dbReference>
<dbReference type="InterPro" id="IPR036388">
    <property type="entry name" value="WH-like_DNA-bd_sf"/>
</dbReference>
<dbReference type="NCBIfam" id="NF001055">
    <property type="entry name" value="PRK00117.2-5"/>
    <property type="match status" value="1"/>
</dbReference>
<dbReference type="PANTHER" id="PTHR33602">
    <property type="entry name" value="REGULATORY PROTEIN RECX FAMILY PROTEIN"/>
    <property type="match status" value="1"/>
</dbReference>
<dbReference type="PANTHER" id="PTHR33602:SF1">
    <property type="entry name" value="REGULATORY PROTEIN RECX FAMILY PROTEIN"/>
    <property type="match status" value="1"/>
</dbReference>
<dbReference type="Pfam" id="PF02631">
    <property type="entry name" value="RecX_HTH2"/>
    <property type="match status" value="1"/>
</dbReference>
<dbReference type="Pfam" id="PF21981">
    <property type="entry name" value="RecX_HTH3"/>
    <property type="match status" value="1"/>
</dbReference>
<evidence type="ECO:0000255" key="1">
    <source>
        <dbReference type="HAMAP-Rule" id="MF_01114"/>
    </source>
</evidence>
<organism>
    <name type="scientific">Neisseria gonorrhoeae (strain ATCC 700825 / FA 1090)</name>
    <dbReference type="NCBI Taxonomy" id="242231"/>
    <lineage>
        <taxon>Bacteria</taxon>
        <taxon>Pseudomonadati</taxon>
        <taxon>Pseudomonadota</taxon>
        <taxon>Betaproteobacteria</taxon>
        <taxon>Neisseriales</taxon>
        <taxon>Neisseriaceae</taxon>
        <taxon>Neisseria</taxon>
    </lineage>
</organism>
<proteinExistence type="inferred from homology"/>
<keyword id="KW-0963">Cytoplasm</keyword>
<keyword id="KW-1185">Reference proteome</keyword>
<feature type="chain" id="PRO_1000065191" description="Regulatory protein RecX">
    <location>
        <begin position="1"/>
        <end position="153"/>
    </location>
</feature>
<gene>
    <name evidence="1" type="primary">recX</name>
    <name type="ordered locus">NGO_1053</name>
</gene>
<accession>Q5F7W3</accession>
<protein>
    <recommendedName>
        <fullName evidence="1">Regulatory protein RecX</fullName>
    </recommendedName>
</protein>
<name>RECX_NEIG1</name>
<comment type="function">
    <text evidence="1">Modulates RecA activity.</text>
</comment>
<comment type="subcellular location">
    <subcellularLocation>
        <location evidence="1">Cytoplasm</location>
    </subcellularLocation>
</comment>
<comment type="similarity">
    <text evidence="1">Belongs to the RecX family.</text>
</comment>